<sequence length="331" mass="37278">MLGIWTLLPLVLTSVVRLLSKCVNAQVTDINSKGFELRKIVTTIETRNLEGLHHEGQFCRNPCPPGERKARDCTVNEDEPDCVPCQEGKEYTDKGHFSSKCRRCRLCDEGHGLEVEINCTRTQNTKCRCKPNFFCNSAVCEHCDPCTKCKHGIIEECTLTSNTKCKEEDSRSDLLWLCLLLLLIPPIVYVVIKKACRKHRKENQGPHESTTLNPETAINLSDVDLSKYITTIAGGMTLSQVRDFVRKNGVSEAKIDEIKNDNVQDTAEQKVQLLRNWYQLHEKKDACDTLIKGLKTAGLCTLAEKIHAVILKDITSDTENSNFGNEVQNLV</sequence>
<keyword id="KW-0053">Apoptosis</keyword>
<keyword id="KW-0112">Calmodulin-binding</keyword>
<keyword id="KW-1003">Cell membrane</keyword>
<keyword id="KW-1015">Disulfide bond</keyword>
<keyword id="KW-0325">Glycoprotein</keyword>
<keyword id="KW-0449">Lipoprotein</keyword>
<keyword id="KW-0472">Membrane</keyword>
<keyword id="KW-0564">Palmitate</keyword>
<keyword id="KW-0597">Phosphoprotein</keyword>
<keyword id="KW-0675">Receptor</keyword>
<keyword id="KW-1185">Reference proteome</keyword>
<keyword id="KW-0677">Repeat</keyword>
<keyword id="KW-0732">Signal</keyword>
<keyword id="KW-0812">Transmembrane</keyword>
<keyword id="KW-1133">Transmembrane helix</keyword>
<accession>Q9BDN4</accession>
<dbReference type="EMBL" id="AF344843">
    <property type="protein sequence ID" value="AAK37602.1"/>
    <property type="molecule type" value="mRNA"/>
</dbReference>
<dbReference type="RefSeq" id="NP_001292900.1">
    <property type="nucleotide sequence ID" value="NM_001305971.1"/>
</dbReference>
<dbReference type="SMR" id="Q9BDN4"/>
<dbReference type="STRING" id="9531.ENSCATP00000040382"/>
<dbReference type="GlyCosmos" id="Q9BDN4">
    <property type="glycosylation" value="1 site, No reported glycans"/>
</dbReference>
<dbReference type="GeneID" id="105587157"/>
<dbReference type="CTD" id="355"/>
<dbReference type="Proteomes" id="UP000233060">
    <property type="component" value="Unassembled WGS sequence"/>
</dbReference>
<dbReference type="GO" id="GO:0031265">
    <property type="term" value="C:CD95 death-inducing signaling complex"/>
    <property type="evidence" value="ECO:0007669"/>
    <property type="project" value="TreeGrafter"/>
</dbReference>
<dbReference type="GO" id="GO:0009897">
    <property type="term" value="C:external side of plasma membrane"/>
    <property type="evidence" value="ECO:0007669"/>
    <property type="project" value="TreeGrafter"/>
</dbReference>
<dbReference type="GO" id="GO:0045121">
    <property type="term" value="C:membrane raft"/>
    <property type="evidence" value="ECO:0007669"/>
    <property type="project" value="UniProtKB-SubCell"/>
</dbReference>
<dbReference type="GO" id="GO:0005516">
    <property type="term" value="F:calmodulin binding"/>
    <property type="evidence" value="ECO:0000250"/>
    <property type="project" value="UniProtKB"/>
</dbReference>
<dbReference type="GO" id="GO:0005031">
    <property type="term" value="F:tumor necrosis factor receptor activity"/>
    <property type="evidence" value="ECO:0007669"/>
    <property type="project" value="TreeGrafter"/>
</dbReference>
<dbReference type="GO" id="GO:0006924">
    <property type="term" value="P:activation-induced cell death of T cells"/>
    <property type="evidence" value="ECO:0007669"/>
    <property type="project" value="TreeGrafter"/>
</dbReference>
<dbReference type="GO" id="GO:0097192">
    <property type="term" value="P:extrinsic apoptotic signaling pathway in absence of ligand"/>
    <property type="evidence" value="ECO:0007669"/>
    <property type="project" value="TreeGrafter"/>
</dbReference>
<dbReference type="GO" id="GO:0006955">
    <property type="term" value="P:immune response"/>
    <property type="evidence" value="ECO:0007669"/>
    <property type="project" value="InterPro"/>
</dbReference>
<dbReference type="GO" id="GO:0097049">
    <property type="term" value="P:motor neuron apoptotic process"/>
    <property type="evidence" value="ECO:0007669"/>
    <property type="project" value="TreeGrafter"/>
</dbReference>
<dbReference type="GO" id="GO:0097527">
    <property type="term" value="P:necroptotic signaling pathway"/>
    <property type="evidence" value="ECO:0007669"/>
    <property type="project" value="TreeGrafter"/>
</dbReference>
<dbReference type="GO" id="GO:0043066">
    <property type="term" value="P:negative regulation of apoptotic process"/>
    <property type="evidence" value="ECO:0007669"/>
    <property type="project" value="TreeGrafter"/>
</dbReference>
<dbReference type="GO" id="GO:0032872">
    <property type="term" value="P:regulation of stress-activated MAPK cascade"/>
    <property type="evidence" value="ECO:0007669"/>
    <property type="project" value="TreeGrafter"/>
</dbReference>
<dbReference type="CDD" id="cd08316">
    <property type="entry name" value="Death_FAS_TNFRSF6"/>
    <property type="match status" value="1"/>
</dbReference>
<dbReference type="CDD" id="cd10579">
    <property type="entry name" value="TNFRSF6"/>
    <property type="match status" value="1"/>
</dbReference>
<dbReference type="FunFam" id="1.10.533.10:FF:000057">
    <property type="entry name" value="Tumor necrosis factor receptor superfamily member 6"/>
    <property type="match status" value="1"/>
</dbReference>
<dbReference type="FunFam" id="2.10.50.10:FF:000021">
    <property type="entry name" value="Tumor necrosis factor receptor superfamily member 6"/>
    <property type="match status" value="1"/>
</dbReference>
<dbReference type="Gene3D" id="1.10.533.10">
    <property type="entry name" value="Death Domain, Fas"/>
    <property type="match status" value="1"/>
</dbReference>
<dbReference type="Gene3D" id="2.10.50.10">
    <property type="entry name" value="Tumor Necrosis Factor Receptor, subunit A, domain 2"/>
    <property type="match status" value="2"/>
</dbReference>
<dbReference type="InterPro" id="IPR011029">
    <property type="entry name" value="DEATH-like_dom_sf"/>
</dbReference>
<dbReference type="InterPro" id="IPR000488">
    <property type="entry name" value="Death_dom"/>
</dbReference>
<dbReference type="InterPro" id="IPR008063">
    <property type="entry name" value="Fas_rcpt"/>
</dbReference>
<dbReference type="InterPro" id="IPR001368">
    <property type="entry name" value="TNFR/NGFR_Cys_rich_reg"/>
</dbReference>
<dbReference type="InterPro" id="IPR033998">
    <property type="entry name" value="TNFRSF6_death"/>
</dbReference>
<dbReference type="InterPro" id="IPR033999">
    <property type="entry name" value="TNFRSF6_N"/>
</dbReference>
<dbReference type="PANTHER" id="PTHR46874">
    <property type="entry name" value="TUMOR NECROSIS FACTOR RECEPTOR SUPERFAMILY MEMBER 6"/>
    <property type="match status" value="1"/>
</dbReference>
<dbReference type="PANTHER" id="PTHR46874:SF1">
    <property type="entry name" value="TUMOR NECROSIS FACTOR RECEPTOR SUPERFAMILY MEMBER 6"/>
    <property type="match status" value="1"/>
</dbReference>
<dbReference type="Pfam" id="PF00531">
    <property type="entry name" value="Death"/>
    <property type="match status" value="1"/>
</dbReference>
<dbReference type="Pfam" id="PF00020">
    <property type="entry name" value="TNFR_c6"/>
    <property type="match status" value="2"/>
</dbReference>
<dbReference type="PRINTS" id="PR01680">
    <property type="entry name" value="TNFACTORR6"/>
</dbReference>
<dbReference type="SMART" id="SM00005">
    <property type="entry name" value="DEATH"/>
    <property type="match status" value="1"/>
</dbReference>
<dbReference type="SMART" id="SM00208">
    <property type="entry name" value="TNFR"/>
    <property type="match status" value="2"/>
</dbReference>
<dbReference type="SUPFAM" id="SSF47986">
    <property type="entry name" value="DEATH domain"/>
    <property type="match status" value="1"/>
</dbReference>
<dbReference type="SUPFAM" id="SSF57586">
    <property type="entry name" value="TNF receptor-like"/>
    <property type="match status" value="2"/>
</dbReference>
<dbReference type="PROSITE" id="PS50017">
    <property type="entry name" value="DEATH_DOMAIN"/>
    <property type="match status" value="1"/>
</dbReference>
<dbReference type="PROSITE" id="PS00652">
    <property type="entry name" value="TNFR_NGFR_1"/>
    <property type="match status" value="2"/>
</dbReference>
<dbReference type="PROSITE" id="PS50050">
    <property type="entry name" value="TNFR_NGFR_2"/>
    <property type="match status" value="2"/>
</dbReference>
<name>TNR6_CERAT</name>
<proteinExistence type="evidence at transcript level"/>
<protein>
    <recommendedName>
        <fullName>Tumor necrosis factor receptor superfamily member 6</fullName>
    </recommendedName>
    <alternativeName>
        <fullName>Apo-1 antigen</fullName>
    </alternativeName>
    <alternativeName>
        <fullName>Apoptosis-mediating surface antigen FAS</fullName>
    </alternativeName>
    <alternativeName>
        <fullName>FASLG receptor</fullName>
    </alternativeName>
    <cdAntigenName>CD95</cdAntigenName>
</protein>
<comment type="function">
    <text evidence="1">Receptor for TNFSF6/FASLG. The adapter molecule FADD recruits caspase-8 to the activated receptor. The resulting death-inducing signaling complex (DISC) performs caspase-8 proteolytic activation which initiates the subsequent cascade of caspases (aspartate-specific cysteine proteases) mediating apoptosis. FAS-mediated apoptosis may have a role in the induction of peripheral tolerance, in the antigen-stimulated suicide of mature T-cells, or both (By similarity).</text>
</comment>
<comment type="subunit">
    <text evidence="2 3">Binds DAXX. Interacts with HIPK3 (By similarity). Part of a complex containing HIPK3 and FADD (By similarity). Binds RIPK1 and FAIM2. Interacts with BABAM2 and FEM1B. Interacts with FADD (By similarity). Interacts directly (via DED domain) with NOL3 (via CARD domain); inhibits death-inducing signaling complex (DISC) assembly by inhibiting the increase in FAS-FADD binding induced by FAS activation (By similarity). Interacts with CALM (By similarity). In the absence of stimulation, interacts with BIRC2, DDX3X and GSK3B. The interaction with BIRC2 and DDX3X is further enhanced upon receptor stimulation and accompanied by DDX3X and BIRC2 cleavage (By similarity).</text>
</comment>
<comment type="subcellular location">
    <subcellularLocation>
        <location evidence="4">Cell membrane</location>
        <topology evidence="4">Single-pass type I membrane protein</topology>
    </subcellularLocation>
    <subcellularLocation>
        <location evidence="2">Membrane raft</location>
    </subcellularLocation>
</comment>
<comment type="domain">
    <text>Contains a death domain involved in the binding of FADD, and maybe to other cytosolic adapter proteins.</text>
</comment>
<comment type="PTM">
    <text evidence="2">Palmitoylated. Palmitoylation by ZDHHC7 prevents the lysosomal degradation of FAS regulating its expression at the plasma membrane.</text>
</comment>
<feature type="signal peptide" evidence="5">
    <location>
        <begin position="1"/>
        <end position="25"/>
    </location>
</feature>
<feature type="chain" id="PRO_0000034562" description="Tumor necrosis factor receptor superfamily member 6">
    <location>
        <begin position="26"/>
        <end position="331"/>
    </location>
</feature>
<feature type="topological domain" description="Extracellular" evidence="5">
    <location>
        <begin position="26"/>
        <end position="171"/>
    </location>
</feature>
<feature type="transmembrane region" description="Helical" evidence="5">
    <location>
        <begin position="172"/>
        <end position="192"/>
    </location>
</feature>
<feature type="topological domain" description="Cytoplasmic" evidence="5">
    <location>
        <begin position="193"/>
        <end position="331"/>
    </location>
</feature>
<feature type="repeat" description="TNFR-Cys 1">
    <location>
        <begin position="47"/>
        <end position="83"/>
    </location>
</feature>
<feature type="repeat" description="TNFR-Cys 2">
    <location>
        <begin position="84"/>
        <end position="127"/>
    </location>
</feature>
<feature type="repeat" description="TNFR-Cys 3">
    <location>
        <begin position="128"/>
        <end position="166"/>
    </location>
</feature>
<feature type="domain" description="Death" evidence="6">
    <location>
        <begin position="226"/>
        <end position="310"/>
    </location>
</feature>
<feature type="region of interest" description="Interaction with HIPK3" evidence="1">
    <location>
        <begin position="209"/>
        <end position="313"/>
    </location>
</feature>
<feature type="region of interest" description="Interaction with CALM" evidence="2">
    <location>
        <begin position="226"/>
        <end position="250"/>
    </location>
</feature>
<feature type="modified residue" description="Phosphothreonine" evidence="3">
    <location>
        <position position="211"/>
    </location>
</feature>
<feature type="modified residue" description="Phosphoserine" evidence="2">
    <location>
        <position position="221"/>
    </location>
</feature>
<feature type="modified residue" description="Phosphothreonine" evidence="3">
    <location>
        <position position="318"/>
    </location>
</feature>
<feature type="lipid moiety-binding region" description="S-palmitoyl cysteine" evidence="2">
    <location>
        <position position="196"/>
    </location>
</feature>
<feature type="glycosylation site" description="N-linked (GlcNAc...) asparagine" evidence="5">
    <location>
        <position position="118"/>
    </location>
</feature>
<feature type="disulfide bond" evidence="7">
    <location>
        <begin position="59"/>
        <end position="73"/>
    </location>
</feature>
<feature type="disulfide bond" evidence="7">
    <location>
        <begin position="63"/>
        <end position="82"/>
    </location>
</feature>
<feature type="disulfide bond" evidence="7">
    <location>
        <begin position="85"/>
        <end position="101"/>
    </location>
</feature>
<feature type="disulfide bond" evidence="7">
    <location>
        <begin position="104"/>
        <end position="119"/>
    </location>
</feature>
<feature type="disulfide bond" evidence="7">
    <location>
        <begin position="107"/>
        <end position="127"/>
    </location>
</feature>
<feature type="disulfide bond" evidence="7">
    <location>
        <begin position="129"/>
        <end position="143"/>
    </location>
</feature>
<feature type="disulfide bond" evidence="7">
    <location>
        <begin position="146"/>
        <end position="157"/>
    </location>
</feature>
<feature type="disulfide bond" evidence="7">
    <location>
        <begin position="149"/>
        <end position="165"/>
    </location>
</feature>
<feature type="sequence variant" evidence="8">
    <original>I</original>
    <variation>V</variation>
    <location>
        <position position="44"/>
    </location>
</feature>
<feature type="sequence variant" evidence="8">
    <original>R</original>
    <variation>Q</variation>
    <location>
        <position position="47"/>
    </location>
</feature>
<feature type="sequence variant" evidence="8">
    <original>E</original>
    <variation>D</variation>
    <location>
        <position position="55"/>
    </location>
</feature>
<feature type="sequence variant" evidence="8">
    <original>R</original>
    <variation>H</variation>
    <location>
        <position position="60"/>
    </location>
</feature>
<feature type="sequence variant" evidence="8">
    <original>N</original>
    <variation>S</variation>
    <location>
        <position position="61"/>
    </location>
</feature>
<feature type="sequence variant" evidence="8">
    <original>E</original>
    <variation>G</variation>
    <location>
        <position position="77"/>
    </location>
</feature>
<feature type="sequence variant" evidence="8">
    <original>G</original>
    <variation>A</variation>
    <location>
        <position position="95"/>
    </location>
</feature>
<feature type="sequence variant" evidence="8">
    <original>E</original>
    <variation>G</variation>
    <location>
        <position position="282"/>
    </location>
</feature>
<feature type="sequence variant" evidence="8">
    <original>G</original>
    <variation>D</variation>
    <location>
        <position position="298"/>
    </location>
</feature>
<reference key="1">
    <citation type="journal article" date="2001" name="Immunogenetics">
        <title>Cloning, sequencing, and homology analysis of nonhuman primate Fas/Fas-ligand and co-stimulatory molecules.</title>
        <authorList>
            <person name="Villinger F.J."/>
            <person name="Bostik P."/>
            <person name="Mayne A.E."/>
            <person name="King C.L."/>
            <person name="Genain C.P."/>
            <person name="Weiss W.R."/>
            <person name="Ansari A.A."/>
        </authorList>
    </citation>
    <scope>NUCLEOTIDE SEQUENCE [MRNA]</scope>
    <scope>VARIANTS VAL-44; GLN-47; ASP-55; HIS-60; SER-61; GLY-77; ALA-95; GLY-282 AND ASP-298</scope>
</reference>
<organism>
    <name type="scientific">Cercocebus atys</name>
    <name type="common">Sooty mangabey</name>
    <name type="synonym">Cercocebus torquatus atys</name>
    <dbReference type="NCBI Taxonomy" id="9531"/>
    <lineage>
        <taxon>Eukaryota</taxon>
        <taxon>Metazoa</taxon>
        <taxon>Chordata</taxon>
        <taxon>Craniata</taxon>
        <taxon>Vertebrata</taxon>
        <taxon>Euteleostomi</taxon>
        <taxon>Mammalia</taxon>
        <taxon>Eutheria</taxon>
        <taxon>Euarchontoglires</taxon>
        <taxon>Primates</taxon>
        <taxon>Haplorrhini</taxon>
        <taxon>Catarrhini</taxon>
        <taxon>Cercopithecidae</taxon>
        <taxon>Cercopithecinae</taxon>
        <taxon>Cercocebus</taxon>
    </lineage>
</organism>
<gene>
    <name type="primary">FAS</name>
    <name type="synonym">APT1</name>
    <name type="synonym">TNFRSF6</name>
</gene>
<evidence type="ECO:0000250" key="1"/>
<evidence type="ECO:0000250" key="2">
    <source>
        <dbReference type="UniProtKB" id="P25445"/>
    </source>
</evidence>
<evidence type="ECO:0000250" key="3">
    <source>
        <dbReference type="UniProtKB" id="P25446"/>
    </source>
</evidence>
<evidence type="ECO:0000250" key="4">
    <source>
        <dbReference type="UniProtKB" id="P51867"/>
    </source>
</evidence>
<evidence type="ECO:0000255" key="5"/>
<evidence type="ECO:0000255" key="6">
    <source>
        <dbReference type="PROSITE-ProRule" id="PRU00064"/>
    </source>
</evidence>
<evidence type="ECO:0000255" key="7">
    <source>
        <dbReference type="PROSITE-ProRule" id="PRU00206"/>
    </source>
</evidence>
<evidence type="ECO:0000269" key="8">
    <source>
    </source>
</evidence>